<name>LMBD2_REOVJ</name>
<accession>Q91RA4</accession>
<feature type="chain" id="PRO_0000344999" description="Outer capsid protein lambda-2">
    <location>
        <begin position="1"/>
        <end position="1288"/>
    </location>
</feature>
<feature type="binding site" evidence="2">
    <location>
        <begin position="892"/>
        <end position="899"/>
    </location>
    <ligand>
        <name>ATP</name>
        <dbReference type="ChEBI" id="CHEBI:30616"/>
    </ligand>
</feature>
<feature type="site" description="Involved in formation of the phosphoamide bond" evidence="1">
    <location>
        <position position="190"/>
    </location>
</feature>
<proteinExistence type="evidence at transcript level"/>
<comment type="function">
    <text evidence="1">Outer capsid protein involved in mRNA capping. Catalyzes the last 3 enzymatic activities for formation of the 5' cap structure on the viral plus-strand transcripts, namely the RNA guanylyltransferase, RNA-7N- and RNA-2'O-methyltransferase activities (By similarity).</text>
</comment>
<comment type="catalytic activity">
    <reaction>
        <text>a 5'-end diphospho-ribonucleoside in mRNA + GTP + H(+) = a 5'-end (5'-triphosphoguanosine)-ribonucleoside in mRNA + diphosphate</text>
        <dbReference type="Rhea" id="RHEA:67012"/>
        <dbReference type="Rhea" id="RHEA-COMP:17165"/>
        <dbReference type="Rhea" id="RHEA-COMP:17166"/>
        <dbReference type="ChEBI" id="CHEBI:15378"/>
        <dbReference type="ChEBI" id="CHEBI:33019"/>
        <dbReference type="ChEBI" id="CHEBI:37565"/>
        <dbReference type="ChEBI" id="CHEBI:167616"/>
        <dbReference type="ChEBI" id="CHEBI:167617"/>
        <dbReference type="EC" id="2.7.7.50"/>
    </reaction>
</comment>
<comment type="catalytic activity">
    <reaction>
        <text>a 5'-end (5'-triphosphoguanosine)-ribonucleoside in mRNA + S-adenosyl-L-methionine = a 5'-end (N(7)-methyl 5'-triphosphoguanosine)-ribonucleoside in mRNA + S-adenosyl-L-homocysteine</text>
        <dbReference type="Rhea" id="RHEA:67008"/>
        <dbReference type="Rhea" id="RHEA-COMP:17166"/>
        <dbReference type="Rhea" id="RHEA-COMP:17167"/>
        <dbReference type="ChEBI" id="CHEBI:57856"/>
        <dbReference type="ChEBI" id="CHEBI:59789"/>
        <dbReference type="ChEBI" id="CHEBI:156461"/>
        <dbReference type="ChEBI" id="CHEBI:167617"/>
        <dbReference type="EC" id="2.1.1.56"/>
    </reaction>
</comment>
<comment type="subunit">
    <text evidence="1">Interacts with protein mu-NS; in viral inclusions.</text>
</comment>
<comment type="subcellular location">
    <subcellularLocation>
        <location evidence="3">Virion</location>
    </subcellularLocation>
</comment>
<comment type="similarity">
    <text evidence="3">Belongs to the orthoreovirus lambda-2 protein family.</text>
</comment>
<protein>
    <recommendedName>
        <fullName>Outer capsid protein lambda-2</fullName>
        <shortName>Lambda2</shortName>
    </recommendedName>
    <alternativeName>
        <fullName>Lambda2(Cap)</fullName>
    </alternativeName>
    <domain>
        <recommendedName>
            <fullName>mRNA guanylyltransferase</fullName>
            <ecNumber>2.7.7.50</ecNumber>
        </recommendedName>
    </domain>
    <domain>
        <recommendedName>
            <fullName>mRNA (guanine-N(7))-methyltransferase</fullName>
            <ecNumber>2.1.1.56</ecNumber>
        </recommendedName>
    </domain>
</protein>
<organism>
    <name type="scientific">Reovirus type 2 (strain D5/Jones)</name>
    <name type="common">T2J</name>
    <name type="synonym">Mammalian orthoreovirus 2</name>
    <dbReference type="NCBI Taxonomy" id="10885"/>
    <lineage>
        <taxon>Viruses</taxon>
        <taxon>Riboviria</taxon>
        <taxon>Orthornavirae</taxon>
        <taxon>Duplornaviricota</taxon>
        <taxon>Resentoviricetes</taxon>
        <taxon>Reovirales</taxon>
        <taxon>Spinareoviridae</taxon>
        <taxon>Orthoreovirus</taxon>
        <taxon>Mammalian orthoreovirus</taxon>
    </lineage>
</organism>
<reference key="1">
    <citation type="journal article" date="2001" name="Virology">
        <title>Mammalian reovirus L2 gene and lambda2 core spike protein sequences and whole-genome comparisons of reoviruses type 1 Lang, type 2 Jones, and type 3 Dearing.</title>
        <authorList>
            <person name="Breun L.A."/>
            <person name="Broering T.J."/>
            <person name="McCutcheon A.M."/>
            <person name="Harrison S.J."/>
            <person name="Luongo C.L."/>
            <person name="Nibert M.L."/>
        </authorList>
    </citation>
    <scope>NUCLEOTIDE SEQUENCE [MRNA]</scope>
</reference>
<evidence type="ECO:0000250" key="1"/>
<evidence type="ECO:0000255" key="2"/>
<evidence type="ECO:0000305" key="3"/>
<gene>
    <name type="primary">L2</name>
</gene>
<organismHost>
    <name type="scientific">Mammalia</name>
    <dbReference type="NCBI Taxonomy" id="40674"/>
</organismHost>
<keyword id="KW-0067">ATP-binding</keyword>
<keyword id="KW-0167">Capsid protein</keyword>
<keyword id="KW-0342">GTP-binding</keyword>
<keyword id="KW-0489">Methyltransferase</keyword>
<keyword id="KW-0506">mRNA capping</keyword>
<keyword id="KW-0507">mRNA processing</keyword>
<keyword id="KW-0511">Multifunctional enzyme</keyword>
<keyword id="KW-0547">Nucleotide-binding</keyword>
<keyword id="KW-0548">Nucleotidyltransferase</keyword>
<keyword id="KW-1152">Outer capsid protein</keyword>
<keyword id="KW-0949">S-adenosyl-L-methionine</keyword>
<keyword id="KW-0808">Transferase</keyword>
<keyword id="KW-0946">Virion</keyword>
<dbReference type="EC" id="2.7.7.50"/>
<dbReference type="EC" id="2.1.1.56"/>
<dbReference type="EMBL" id="AF378005">
    <property type="protein sequence ID" value="AAK57509.1"/>
    <property type="molecule type" value="mRNA"/>
</dbReference>
<dbReference type="SMR" id="Q91RA4"/>
<dbReference type="Proteomes" id="UP000006370">
    <property type="component" value="Genome"/>
</dbReference>
<dbReference type="GO" id="GO:0039624">
    <property type="term" value="C:viral outer capsid"/>
    <property type="evidence" value="ECO:0007669"/>
    <property type="project" value="UniProtKB-KW"/>
</dbReference>
<dbReference type="GO" id="GO:0005524">
    <property type="term" value="F:ATP binding"/>
    <property type="evidence" value="ECO:0007669"/>
    <property type="project" value="UniProtKB-KW"/>
</dbReference>
<dbReference type="GO" id="GO:0005525">
    <property type="term" value="F:GTP binding"/>
    <property type="evidence" value="ECO:0007669"/>
    <property type="project" value="UniProtKB-KW"/>
</dbReference>
<dbReference type="GO" id="GO:0004482">
    <property type="term" value="F:mRNA 5'-cap (guanine-N7-)-methyltransferase activity"/>
    <property type="evidence" value="ECO:0007669"/>
    <property type="project" value="UniProtKB-EC"/>
</dbReference>
<dbReference type="GO" id="GO:0004484">
    <property type="term" value="F:mRNA guanylyltransferase activity"/>
    <property type="evidence" value="ECO:0007669"/>
    <property type="project" value="UniProtKB-EC"/>
</dbReference>
<dbReference type="Gene3D" id="2.60.40.10">
    <property type="entry name" value="Immunoglobulins"/>
    <property type="match status" value="1"/>
</dbReference>
<dbReference type="Gene3D" id="3.55.60.10">
    <property type="entry name" value="Reovirus components"/>
    <property type="match status" value="1"/>
</dbReference>
<dbReference type="Gene3D" id="3.90.1810.10">
    <property type="entry name" value="Reovirus components"/>
    <property type="match status" value="1"/>
</dbReference>
<dbReference type="Gene3D" id="3.40.50.10760">
    <property type="entry name" value="Reovirus core"/>
    <property type="match status" value="1"/>
</dbReference>
<dbReference type="Gene3D" id="3.40.50.150">
    <property type="entry name" value="Vaccinia Virus protein VP39"/>
    <property type="match status" value="1"/>
</dbReference>
<dbReference type="InterPro" id="IPR013783">
    <property type="entry name" value="Ig-like_fold"/>
</dbReference>
<dbReference type="InterPro" id="IPR010311">
    <property type="entry name" value="Reovirus_L2"/>
</dbReference>
<dbReference type="InterPro" id="IPR048604">
    <property type="entry name" value="Reovirus_L2_4th"/>
</dbReference>
<dbReference type="InterPro" id="IPR048603">
    <property type="entry name" value="Reovirus_L2_6th"/>
</dbReference>
<dbReference type="InterPro" id="IPR048602">
    <property type="entry name" value="Reovirus_L2_7th"/>
</dbReference>
<dbReference type="InterPro" id="IPR048294">
    <property type="entry name" value="Reovirus_L2_8th"/>
</dbReference>
<dbReference type="InterPro" id="IPR048601">
    <property type="entry name" value="Reovirus_L2_GTase"/>
</dbReference>
<dbReference type="InterPro" id="IPR048598">
    <property type="entry name" value="Reovirus_L2_MT1"/>
</dbReference>
<dbReference type="InterPro" id="IPR048597">
    <property type="entry name" value="Reovirus_L2_MT2"/>
</dbReference>
<dbReference type="InterPro" id="IPR048596">
    <property type="entry name" value="Reovirus_L2_N"/>
</dbReference>
<dbReference type="InterPro" id="IPR029063">
    <property type="entry name" value="SAM-dependent_MTases_sf"/>
</dbReference>
<dbReference type="Pfam" id="PF21062">
    <property type="entry name" value="Reovirus_L2_4th"/>
    <property type="match status" value="1"/>
</dbReference>
<dbReference type="Pfam" id="PF21060">
    <property type="entry name" value="Reovirus_L2_6th"/>
    <property type="match status" value="1"/>
</dbReference>
<dbReference type="Pfam" id="PF21061">
    <property type="entry name" value="Reovirus_L2_7th"/>
    <property type="match status" value="1"/>
</dbReference>
<dbReference type="Pfam" id="PF06016">
    <property type="entry name" value="Reovirus_L2_8th"/>
    <property type="match status" value="1"/>
</dbReference>
<dbReference type="Pfam" id="PF21063">
    <property type="entry name" value="Reovirus_L2_GTase"/>
    <property type="match status" value="1"/>
</dbReference>
<dbReference type="Pfam" id="PF21065">
    <property type="entry name" value="Reovirus_L2_MT1"/>
    <property type="match status" value="1"/>
</dbReference>
<dbReference type="Pfam" id="PF21066">
    <property type="entry name" value="Reovirus_L2_MT2"/>
    <property type="match status" value="1"/>
</dbReference>
<dbReference type="Pfam" id="PF21064">
    <property type="entry name" value="Reovirus_L2_N"/>
    <property type="match status" value="1"/>
</dbReference>
<dbReference type="PIRSF" id="PIRSF000845">
    <property type="entry name" value="Reovirus_L2"/>
    <property type="match status" value="1"/>
</dbReference>
<sequence length="1288" mass="143152">MANVWGVRLADSLSSPTLESRNRSYTLHDFCSDLDASAGKEPWKALRNQRTSEIVAVRLFRPLQGLILDTHMYGFPGEFDAWEVFVKEKLRVLKYEVLRVYPISGYSNSHVNVFVANALVGAFLSNQAFYDLLPLLIINDTMINDLLGAGVSLAQFFQAHGDVLEVAAGRKYIQMNGYSNDDDDPPLFAKDLSDYAKAFYCESFEVLDRFFWTHDASAGVLVHYDKPTNGNHYLLGTLTQMVSAPPFIINATDAMMLESCVEQFAANAAARPAQPATRLDQCYHLRWGAQYVGEDSLTYRLGVLSLLATNGYQLARPIPKQLTNRWLSSFVSQIMSEGANETPLWPQERYVQIAYDSPSVVDGAVQYGYVRKNQLRLGMRISPIQSLSDVPAPVAWLPQYTIDQTALEDGDMVGHMSQLPLRPEYGSMWVGEALSYYVDYNQSHRVVAAKELPQLPDTYFDGDEQYGRSLFSLARRIGDRSLIKDTAVLKHAYQAIDPSTGREYLRAGQSVAYFGASAGHSGADQPLVIEPWLQGKISGVPSPASIRQFGYDVAKGAIVDLARPFPSGDYQFVYSDVDQVVDGHDDLSISSNLVESILSSCMQATSPGGSFVAKINFPTRSIWYYIEQKILPNITSYMIIKPFVTNNVEVFFVAFGVHRQSSLTWTSGVYFFLVDHFYRYETLSAISRQLPSYGYVDDGSSVTGLEVISIENPGFSTMTQASRVAISALCANTGNSRKTISIYESHGARVLMLVSRRSPASAKRKARLRYLPLIDPRSLEVQSRTIMPSTPVLFENSNGASPHVCLTMMYNYEVSSAVYDGDVVLDLGTGPEAKILELIPPTSPATCVDIRPTAQPTGCWNVRTTFLQLDYLSDGWITGVRGDIVTCMLSLGAAAAGKSMTFDAAFQQFVRVIAQSAANVVLVQVNCPTDVIRSVRGYLEIDQTSKRYRFPKFGRDEPYSDMESLERICRATWPNCSITWVPLSYDLRWTRLALLEAATLNSASIRIAELMYKYMPVMRVDIHGLPMNKSGNFVVGQNCSLTIPGFNAQDTFNCYYNSALAFSTEDVNAAMIPSVTATFDNAKNEWTLDMVFSDAGIYTMQAVVGVNASPIALGSFVVDSPDVDITDAWPAQLDFTIAGTDVDITVNPYYRLMAFVKIDGQWQIANPDKFQFFASATGTLTMNVKLDIADKYLLYYIRDVQSREVGFYIQHPLQLLNTITLPTNEDLFLSAPDMREWAVKESGNTICILNSQGFIPPQDWDVLTDTISWSPSLPTYVVPPGDYTLTPL</sequence>